<gene>
    <name type="primary">PGM1</name>
</gene>
<proteinExistence type="evidence at protein level"/>
<organism>
    <name type="scientific">Homo sapiens</name>
    <name type="common">Human</name>
    <dbReference type="NCBI Taxonomy" id="9606"/>
    <lineage>
        <taxon>Eukaryota</taxon>
        <taxon>Metazoa</taxon>
        <taxon>Chordata</taxon>
        <taxon>Craniata</taxon>
        <taxon>Vertebrata</taxon>
        <taxon>Euteleostomi</taxon>
        <taxon>Mammalia</taxon>
        <taxon>Eutheria</taxon>
        <taxon>Euarchontoglires</taxon>
        <taxon>Primates</taxon>
        <taxon>Haplorrhini</taxon>
        <taxon>Catarrhini</taxon>
        <taxon>Hominidae</taxon>
        <taxon>Homo</taxon>
    </lineage>
</organism>
<protein>
    <recommendedName>
        <fullName>Phosphoglucomutase-1</fullName>
        <shortName>PGM 1</shortName>
        <ecNumber evidence="5 12">5.4.2.2</ecNumber>
    </recommendedName>
    <alternativeName>
        <fullName>Glucose phosphomutase 1</fullName>
    </alternativeName>
</protein>
<dbReference type="EC" id="5.4.2.2" evidence="5 12"/>
<dbReference type="EMBL" id="M83088">
    <property type="protein sequence ID" value="AAA60080.1"/>
    <property type="molecule type" value="mRNA"/>
</dbReference>
<dbReference type="EMBL" id="BT006961">
    <property type="protein sequence ID" value="AAP35607.1"/>
    <property type="molecule type" value="mRNA"/>
</dbReference>
<dbReference type="EMBL" id="AK298505">
    <property type="protein sequence ID" value="BAG60712.1"/>
    <property type="molecule type" value="mRNA"/>
</dbReference>
<dbReference type="EMBL" id="AK312254">
    <property type="protein sequence ID" value="BAG35186.1"/>
    <property type="molecule type" value="mRNA"/>
</dbReference>
<dbReference type="EMBL" id="AL109925">
    <property type="status" value="NOT_ANNOTATED_CDS"/>
    <property type="molecule type" value="Genomic_DNA"/>
</dbReference>
<dbReference type="EMBL" id="BC001756">
    <property type="protein sequence ID" value="AAH01756.3"/>
    <property type="molecule type" value="mRNA"/>
</dbReference>
<dbReference type="EMBL" id="BC019920">
    <property type="protein sequence ID" value="AAH19920.1"/>
    <property type="molecule type" value="mRNA"/>
</dbReference>
<dbReference type="EMBL" id="BC067763">
    <property type="protein sequence ID" value="AAH67763.2"/>
    <property type="molecule type" value="mRNA"/>
</dbReference>
<dbReference type="EMBL" id="BC090856">
    <property type="protein sequence ID" value="AAH90856.1"/>
    <property type="status" value="ALT_INIT"/>
    <property type="molecule type" value="mRNA"/>
</dbReference>
<dbReference type="EMBL" id="S67989">
    <property type="protein sequence ID" value="AAB29177.2"/>
    <property type="molecule type" value="Genomic_DNA"/>
</dbReference>
<dbReference type="EMBL" id="S67998">
    <property type="protein sequence ID" value="AAB29178.1"/>
    <property type="molecule type" value="Genomic_DNA"/>
</dbReference>
<dbReference type="CCDS" id="CCDS53323.1">
    <molecule id="P36871-2"/>
</dbReference>
<dbReference type="CCDS" id="CCDS53324.1">
    <molecule id="P36871-3"/>
</dbReference>
<dbReference type="CCDS" id="CCDS625.1">
    <molecule id="P36871-1"/>
</dbReference>
<dbReference type="PIR" id="A41801">
    <property type="entry name" value="A41801"/>
</dbReference>
<dbReference type="PIR" id="S39397">
    <property type="entry name" value="S39397"/>
</dbReference>
<dbReference type="RefSeq" id="NP_001166289.1">
    <molecule id="P36871-2"/>
    <property type="nucleotide sequence ID" value="NM_001172818.1"/>
</dbReference>
<dbReference type="RefSeq" id="NP_001166290.1">
    <molecule id="P36871-3"/>
    <property type="nucleotide sequence ID" value="NM_001172819.2"/>
</dbReference>
<dbReference type="RefSeq" id="NP_002624.2">
    <molecule id="P36871-1"/>
    <property type="nucleotide sequence ID" value="NM_002633.2"/>
</dbReference>
<dbReference type="PDB" id="5EPC">
    <property type="method" value="X-ray"/>
    <property type="resolution" value="1.85 A"/>
    <property type="chains" value="A/B=1-562"/>
</dbReference>
<dbReference type="PDB" id="5F9C">
    <property type="method" value="X-ray"/>
    <property type="resolution" value="2.50 A"/>
    <property type="chains" value="A/B=1-562"/>
</dbReference>
<dbReference type="PDB" id="5HSH">
    <property type="method" value="X-ray"/>
    <property type="resolution" value="2.65 A"/>
    <property type="chains" value="A/B=1-562"/>
</dbReference>
<dbReference type="PDB" id="5JN5">
    <property type="method" value="X-ray"/>
    <property type="resolution" value="1.75 A"/>
    <property type="chains" value="A/B=1-562"/>
</dbReference>
<dbReference type="PDB" id="5TR2">
    <property type="method" value="X-ray"/>
    <property type="resolution" value="2.50 A"/>
    <property type="chains" value="A/B=1-562"/>
</dbReference>
<dbReference type="PDB" id="5VBI">
    <property type="method" value="X-ray"/>
    <property type="resolution" value="1.75 A"/>
    <property type="chains" value="A/B=1-562"/>
</dbReference>
<dbReference type="PDB" id="5VEC">
    <property type="method" value="X-ray"/>
    <property type="resolution" value="2.20 A"/>
    <property type="chains" value="A/B=1-562"/>
</dbReference>
<dbReference type="PDB" id="5VG7">
    <property type="method" value="X-ray"/>
    <property type="resolution" value="1.95 A"/>
    <property type="chains" value="A/B=1-562"/>
</dbReference>
<dbReference type="PDB" id="5VIN">
    <property type="method" value="X-ray"/>
    <property type="resolution" value="2.60 A"/>
    <property type="chains" value="A/B=1-562"/>
</dbReference>
<dbReference type="PDB" id="6SNO">
    <property type="method" value="X-ray"/>
    <property type="resolution" value="2.70 A"/>
    <property type="chains" value="A=2-562"/>
</dbReference>
<dbReference type="PDB" id="6SNP">
    <property type="method" value="X-ray"/>
    <property type="resolution" value="2.75 A"/>
    <property type="chains" value="A=2-562"/>
</dbReference>
<dbReference type="PDB" id="6SNQ">
    <property type="method" value="X-ray"/>
    <property type="resolution" value="2.70 A"/>
    <property type="chains" value="A=2-562"/>
</dbReference>
<dbReference type="PDB" id="6UIQ">
    <property type="method" value="X-ray"/>
    <property type="resolution" value="2.30 A"/>
    <property type="chains" value="A/B=1-562"/>
</dbReference>
<dbReference type="PDB" id="6UO6">
    <property type="method" value="X-ray"/>
    <property type="resolution" value="2.15 A"/>
    <property type="chains" value="A/B=1-562"/>
</dbReference>
<dbReference type="PDB" id="7S0W">
    <property type="method" value="X-ray"/>
    <property type="resolution" value="2.50 A"/>
    <property type="chains" value="A/B=1-562"/>
</dbReference>
<dbReference type="PDB" id="7S77">
    <property type="method" value="X-ray"/>
    <property type="resolution" value="2.80 A"/>
    <property type="chains" value="A/B=1-562"/>
</dbReference>
<dbReference type="PDBsum" id="5EPC"/>
<dbReference type="PDBsum" id="5F9C"/>
<dbReference type="PDBsum" id="5HSH"/>
<dbReference type="PDBsum" id="5JN5"/>
<dbReference type="PDBsum" id="5TR2"/>
<dbReference type="PDBsum" id="5VBI"/>
<dbReference type="PDBsum" id="5VEC"/>
<dbReference type="PDBsum" id="5VG7"/>
<dbReference type="PDBsum" id="5VIN"/>
<dbReference type="PDBsum" id="6SNO"/>
<dbReference type="PDBsum" id="6SNP"/>
<dbReference type="PDBsum" id="6SNQ"/>
<dbReference type="PDBsum" id="6UIQ"/>
<dbReference type="PDBsum" id="6UO6"/>
<dbReference type="PDBsum" id="7S0W"/>
<dbReference type="PDBsum" id="7S77"/>
<dbReference type="SMR" id="P36871"/>
<dbReference type="BioGRID" id="111256">
    <property type="interactions" value="110"/>
</dbReference>
<dbReference type="DIP" id="DIP-60903N"/>
<dbReference type="FunCoup" id="P36871">
    <property type="interactions" value="1044"/>
</dbReference>
<dbReference type="IntAct" id="P36871">
    <property type="interactions" value="39"/>
</dbReference>
<dbReference type="MINT" id="P36871"/>
<dbReference type="STRING" id="9606.ENSP00000360124"/>
<dbReference type="DrugBank" id="DB02835">
    <property type="generic name" value="Alpha-D-Glucose 1,6-Bisphosphate"/>
</dbReference>
<dbReference type="DrugBank" id="DB04397">
    <property type="generic name" value="Alpha-D-Glucose-1-Phosphate-6-Vanadate"/>
</dbReference>
<dbReference type="DrugBank" id="DB06773">
    <property type="generic name" value="Human calcitonin"/>
</dbReference>
<dbReference type="GlyGen" id="P36871">
    <property type="glycosylation" value="2 sites, 1 O-linked glycan (1 site)"/>
</dbReference>
<dbReference type="iPTMnet" id="P36871"/>
<dbReference type="MetOSite" id="P36871"/>
<dbReference type="PhosphoSitePlus" id="P36871"/>
<dbReference type="SwissPalm" id="P36871"/>
<dbReference type="BioMuta" id="PGM1"/>
<dbReference type="DMDM" id="585670"/>
<dbReference type="REPRODUCTION-2DPAGE" id="P36871"/>
<dbReference type="CPTAC" id="CPTAC-255"/>
<dbReference type="CPTAC" id="CPTAC-256"/>
<dbReference type="CPTAC" id="CPTAC-988"/>
<dbReference type="jPOST" id="P36871"/>
<dbReference type="MassIVE" id="P36871"/>
<dbReference type="PaxDb" id="9606-ENSP00000360124"/>
<dbReference type="PeptideAtlas" id="P36871"/>
<dbReference type="PRIDE" id="P36871"/>
<dbReference type="ProteomicsDB" id="4816"/>
<dbReference type="ProteomicsDB" id="55222">
    <molecule id="P36871-1"/>
</dbReference>
<dbReference type="ProteomicsDB" id="55223">
    <molecule id="P36871-2"/>
</dbReference>
<dbReference type="Pumba" id="P36871"/>
<dbReference type="TopDownProteomics" id="P36871-1">
    <molecule id="P36871-1"/>
</dbReference>
<dbReference type="Antibodypedia" id="3314">
    <property type="antibodies" value="252 antibodies from 26 providers"/>
</dbReference>
<dbReference type="DNASU" id="5236"/>
<dbReference type="Ensembl" id="ENST00000371083.4">
    <molecule id="P36871-2"/>
    <property type="protein sequence ID" value="ENSP00000360124.4"/>
    <property type="gene ID" value="ENSG00000079739.17"/>
</dbReference>
<dbReference type="Ensembl" id="ENST00000371084.8">
    <molecule id="P36871-1"/>
    <property type="protein sequence ID" value="ENSP00000360125.3"/>
    <property type="gene ID" value="ENSG00000079739.17"/>
</dbReference>
<dbReference type="Ensembl" id="ENST00000540265.5">
    <molecule id="P36871-3"/>
    <property type="protein sequence ID" value="ENSP00000443449.1"/>
    <property type="gene ID" value="ENSG00000079739.17"/>
</dbReference>
<dbReference type="GeneID" id="5236"/>
<dbReference type="KEGG" id="hsa:5236"/>
<dbReference type="MANE-Select" id="ENST00000371084.8">
    <property type="protein sequence ID" value="ENSP00000360125.3"/>
    <property type="RefSeq nucleotide sequence ID" value="NM_002633.3"/>
    <property type="RefSeq protein sequence ID" value="NP_002624.2"/>
</dbReference>
<dbReference type="UCSC" id="uc001dbh.5">
    <molecule id="P36871-1"/>
    <property type="organism name" value="human"/>
</dbReference>
<dbReference type="AGR" id="HGNC:8905"/>
<dbReference type="CTD" id="5236"/>
<dbReference type="DisGeNET" id="5236"/>
<dbReference type="GeneCards" id="PGM1"/>
<dbReference type="GeneReviews" id="PGM1"/>
<dbReference type="HGNC" id="HGNC:8905">
    <property type="gene designation" value="PGM1"/>
</dbReference>
<dbReference type="HPA" id="ENSG00000079739">
    <property type="expression patterns" value="Group enriched (skeletal muscle, tongue)"/>
</dbReference>
<dbReference type="MalaCards" id="PGM1"/>
<dbReference type="MIM" id="171900">
    <property type="type" value="gene"/>
</dbReference>
<dbReference type="MIM" id="614921">
    <property type="type" value="phenotype"/>
</dbReference>
<dbReference type="neXtProt" id="NX_P36871"/>
<dbReference type="OpenTargets" id="ENSG00000079739"/>
<dbReference type="Orphanet" id="319646">
    <property type="disease" value="PGM1-CDG"/>
</dbReference>
<dbReference type="PharmGKB" id="PA33242"/>
<dbReference type="VEuPathDB" id="HostDB:ENSG00000079739"/>
<dbReference type="eggNOG" id="KOG0625">
    <property type="taxonomic scope" value="Eukaryota"/>
</dbReference>
<dbReference type="GeneTree" id="ENSGT00940000155542"/>
<dbReference type="HOGENOM" id="CLU_009330_0_1_1"/>
<dbReference type="InParanoid" id="P36871"/>
<dbReference type="OMA" id="WRDPLFG"/>
<dbReference type="OrthoDB" id="2291at2759"/>
<dbReference type="PAN-GO" id="P36871">
    <property type="GO annotations" value="3 GO annotations based on evolutionary models"/>
</dbReference>
<dbReference type="PhylomeDB" id="P36871"/>
<dbReference type="TreeFam" id="TF300350"/>
<dbReference type="BioCyc" id="MetaCyc:HS01335-MONOMER"/>
<dbReference type="BRENDA" id="5.4.2.2">
    <property type="organism ID" value="2681"/>
</dbReference>
<dbReference type="PathwayCommons" id="P36871"/>
<dbReference type="Reactome" id="R-HSA-3322077">
    <property type="pathway name" value="Glycogen synthesis"/>
</dbReference>
<dbReference type="Reactome" id="R-HSA-5609974">
    <property type="pathway name" value="Defective PGM1 causes PGM1-CDG"/>
</dbReference>
<dbReference type="Reactome" id="R-HSA-6798695">
    <property type="pathway name" value="Neutrophil degranulation"/>
</dbReference>
<dbReference type="Reactome" id="R-HSA-70221">
    <property type="pathway name" value="Glycogen breakdown (glycogenolysis)"/>
</dbReference>
<dbReference type="Reactome" id="R-HSA-70370">
    <property type="pathway name" value="Galactose catabolism"/>
</dbReference>
<dbReference type="SABIO-RK" id="P36871"/>
<dbReference type="SignaLink" id="P36871"/>
<dbReference type="SIGNOR" id="P36871"/>
<dbReference type="BioGRID-ORCS" id="5236">
    <property type="hits" value="13 hits in 1162 CRISPR screens"/>
</dbReference>
<dbReference type="ChiTaRS" id="PGM1">
    <property type="organism name" value="human"/>
</dbReference>
<dbReference type="GeneWiki" id="PGM1"/>
<dbReference type="GenomeRNAi" id="5236"/>
<dbReference type="Pharos" id="P36871">
    <property type="development level" value="Tbio"/>
</dbReference>
<dbReference type="PRO" id="PR:P36871"/>
<dbReference type="Proteomes" id="UP000005640">
    <property type="component" value="Chromosome 1"/>
</dbReference>
<dbReference type="RNAct" id="P36871">
    <property type="molecule type" value="protein"/>
</dbReference>
<dbReference type="Bgee" id="ENSG00000079739">
    <property type="expression patterns" value="Expressed in skeletal muscle tissue of rectus abdominis and 213 other cell types or tissues"/>
</dbReference>
<dbReference type="ExpressionAtlas" id="P36871">
    <property type="expression patterns" value="baseline and differential"/>
</dbReference>
<dbReference type="GO" id="GO:0005737">
    <property type="term" value="C:cytoplasm"/>
    <property type="evidence" value="ECO:0000303"/>
    <property type="project" value="UniProtKB"/>
</dbReference>
<dbReference type="GO" id="GO:0005829">
    <property type="term" value="C:cytosol"/>
    <property type="evidence" value="ECO:0000318"/>
    <property type="project" value="GO_Central"/>
</dbReference>
<dbReference type="GO" id="GO:0070062">
    <property type="term" value="C:extracellular exosome"/>
    <property type="evidence" value="ECO:0007005"/>
    <property type="project" value="UniProtKB"/>
</dbReference>
<dbReference type="GO" id="GO:0005576">
    <property type="term" value="C:extracellular region"/>
    <property type="evidence" value="ECO:0000304"/>
    <property type="project" value="Reactome"/>
</dbReference>
<dbReference type="GO" id="GO:1904813">
    <property type="term" value="C:ficolin-1-rich granule lumen"/>
    <property type="evidence" value="ECO:0000304"/>
    <property type="project" value="Reactome"/>
</dbReference>
<dbReference type="GO" id="GO:1904724">
    <property type="term" value="C:tertiary granule lumen"/>
    <property type="evidence" value="ECO:0000304"/>
    <property type="project" value="Reactome"/>
</dbReference>
<dbReference type="GO" id="GO:0000287">
    <property type="term" value="F:magnesium ion binding"/>
    <property type="evidence" value="ECO:0000314"/>
    <property type="project" value="UniProtKB"/>
</dbReference>
<dbReference type="GO" id="GO:0004614">
    <property type="term" value="F:phosphoglucomutase activity"/>
    <property type="evidence" value="ECO:0000314"/>
    <property type="project" value="UniProtKB"/>
</dbReference>
<dbReference type="GO" id="GO:0005975">
    <property type="term" value="P:carbohydrate metabolic process"/>
    <property type="evidence" value="ECO:0000318"/>
    <property type="project" value="GO_Central"/>
</dbReference>
<dbReference type="GO" id="GO:0033499">
    <property type="term" value="P:galactose catabolic process via UDP-galactose, Leloir pathway"/>
    <property type="evidence" value="ECO:0000315"/>
    <property type="project" value="FlyBase"/>
</dbReference>
<dbReference type="GO" id="GO:0006094">
    <property type="term" value="P:gluconeogenesis"/>
    <property type="evidence" value="ECO:0000304"/>
    <property type="project" value="UniProtKB"/>
</dbReference>
<dbReference type="GO" id="GO:0006006">
    <property type="term" value="P:glucose metabolic process"/>
    <property type="evidence" value="ECO:0000314"/>
    <property type="project" value="UniProtKB"/>
</dbReference>
<dbReference type="GO" id="GO:0006096">
    <property type="term" value="P:glycolytic process"/>
    <property type="evidence" value="ECO:0000304"/>
    <property type="project" value="UniProtKB"/>
</dbReference>
<dbReference type="CDD" id="cd03085">
    <property type="entry name" value="PGM1"/>
    <property type="match status" value="1"/>
</dbReference>
<dbReference type="DisProt" id="DP02748"/>
<dbReference type="FunFam" id="3.30.310.50:FF:000002">
    <property type="entry name" value="Phosphoglucomutase 5"/>
    <property type="match status" value="1"/>
</dbReference>
<dbReference type="FunFam" id="3.40.120.10:FF:000004">
    <property type="entry name" value="Phosphoglucomutase 5"/>
    <property type="match status" value="1"/>
</dbReference>
<dbReference type="FunFam" id="3.40.120.10:FF:000005">
    <property type="entry name" value="Phosphoglucomutase 5"/>
    <property type="match status" value="1"/>
</dbReference>
<dbReference type="FunFam" id="3.40.120.10:FF:000007">
    <property type="entry name" value="Phosphoglucomutase 5"/>
    <property type="match status" value="1"/>
</dbReference>
<dbReference type="Gene3D" id="3.40.120.10">
    <property type="entry name" value="Alpha-D-Glucose-1,6-Bisphosphate, subunit A, domain 3"/>
    <property type="match status" value="3"/>
</dbReference>
<dbReference type="Gene3D" id="3.30.310.50">
    <property type="entry name" value="Alpha-D-phosphohexomutase, C-terminal domain"/>
    <property type="match status" value="1"/>
</dbReference>
<dbReference type="InterPro" id="IPR005844">
    <property type="entry name" value="A-D-PHexomutase_a/b/a-I"/>
</dbReference>
<dbReference type="InterPro" id="IPR016055">
    <property type="entry name" value="A-D-PHexomutase_a/b/a-I/II/III"/>
</dbReference>
<dbReference type="InterPro" id="IPR005845">
    <property type="entry name" value="A-D-PHexomutase_a/b/a-II"/>
</dbReference>
<dbReference type="InterPro" id="IPR005846">
    <property type="entry name" value="A-D-PHexomutase_a/b/a-III"/>
</dbReference>
<dbReference type="InterPro" id="IPR036900">
    <property type="entry name" value="A-D-PHexomutase_C_sf"/>
</dbReference>
<dbReference type="InterPro" id="IPR016066">
    <property type="entry name" value="A-D-PHexomutase_CS"/>
</dbReference>
<dbReference type="InterPro" id="IPR005841">
    <property type="entry name" value="Alpha-D-phosphohexomutase_SF"/>
</dbReference>
<dbReference type="InterPro" id="IPR045244">
    <property type="entry name" value="PGM"/>
</dbReference>
<dbReference type="NCBIfam" id="NF005737">
    <property type="entry name" value="PRK07564.1-1"/>
    <property type="match status" value="1"/>
</dbReference>
<dbReference type="PANTHER" id="PTHR22573:SF37">
    <property type="entry name" value="PHOSPHOGLUCOMUTASE-1"/>
    <property type="match status" value="1"/>
</dbReference>
<dbReference type="PANTHER" id="PTHR22573">
    <property type="entry name" value="PHOSPHOHEXOMUTASE FAMILY MEMBER"/>
    <property type="match status" value="1"/>
</dbReference>
<dbReference type="Pfam" id="PF24947">
    <property type="entry name" value="PGM1_C_vert_fung"/>
    <property type="match status" value="1"/>
</dbReference>
<dbReference type="Pfam" id="PF02878">
    <property type="entry name" value="PGM_PMM_I"/>
    <property type="match status" value="1"/>
</dbReference>
<dbReference type="Pfam" id="PF02879">
    <property type="entry name" value="PGM_PMM_II"/>
    <property type="match status" value="1"/>
</dbReference>
<dbReference type="Pfam" id="PF02880">
    <property type="entry name" value="PGM_PMM_III"/>
    <property type="match status" value="1"/>
</dbReference>
<dbReference type="PRINTS" id="PR00509">
    <property type="entry name" value="PGMPMM"/>
</dbReference>
<dbReference type="SUPFAM" id="SSF55957">
    <property type="entry name" value="Phosphoglucomutase, C-terminal domain"/>
    <property type="match status" value="1"/>
</dbReference>
<dbReference type="SUPFAM" id="SSF53738">
    <property type="entry name" value="Phosphoglucomutase, first 3 domains"/>
    <property type="match status" value="3"/>
</dbReference>
<dbReference type="PROSITE" id="PS00710">
    <property type="entry name" value="PGM_PMM"/>
    <property type="match status" value="1"/>
</dbReference>
<keyword id="KW-0002">3D-structure</keyword>
<keyword id="KW-0007">Acetylation</keyword>
<keyword id="KW-0025">Alternative splicing</keyword>
<keyword id="KW-0119">Carbohydrate metabolism</keyword>
<keyword id="KW-0900">Congenital disorder of glycosylation</keyword>
<keyword id="KW-0963">Cytoplasm</keyword>
<keyword id="KW-0225">Disease variant</keyword>
<keyword id="KW-0313">Glucose metabolism</keyword>
<keyword id="KW-0322">Glycogen storage disease</keyword>
<keyword id="KW-0413">Isomerase</keyword>
<keyword id="KW-0460">Magnesium</keyword>
<keyword id="KW-0479">Metal-binding</keyword>
<keyword id="KW-0597">Phosphoprotein</keyword>
<keyword id="KW-1267">Proteomics identification</keyword>
<keyword id="KW-1185">Reference proteome</keyword>
<accession>P36871</accession>
<accession>B2R5N9</accession>
<accession>B4DPV0</accession>
<accession>Q16105</accession>
<accession>Q16106</accession>
<accession>Q5BKZ9</accession>
<accession>Q6NW22</accession>
<accession>Q86U74</accession>
<accession>Q96J40</accession>
<accession>Q9NTY4</accession>
<name>PGM1_HUMAN</name>
<evidence type="ECO:0000250" key="1">
    <source>
        <dbReference type="UniProtKB" id="P00949"/>
    </source>
</evidence>
<evidence type="ECO:0000250" key="2">
    <source>
        <dbReference type="UniProtKB" id="P38652"/>
    </source>
</evidence>
<evidence type="ECO:0000250" key="3">
    <source>
        <dbReference type="UniProtKB" id="Q9D0F9"/>
    </source>
</evidence>
<evidence type="ECO:0000269" key="4">
    <source>
    </source>
</evidence>
<evidence type="ECO:0000269" key="5">
    <source>
    </source>
</evidence>
<evidence type="ECO:0000269" key="6">
    <source>
    </source>
</evidence>
<evidence type="ECO:0000269" key="7">
    <source>
    </source>
</evidence>
<evidence type="ECO:0000269" key="8">
    <source>
    </source>
</evidence>
<evidence type="ECO:0000269" key="9">
    <source>
    </source>
</evidence>
<evidence type="ECO:0000269" key="10">
    <source>
    </source>
</evidence>
<evidence type="ECO:0000269" key="11">
    <source>
    </source>
</evidence>
<evidence type="ECO:0000269" key="12">
    <source>
    </source>
</evidence>
<evidence type="ECO:0000269" key="13">
    <source>
    </source>
</evidence>
<evidence type="ECO:0000269" key="14">
    <source>
    </source>
</evidence>
<evidence type="ECO:0000269" key="15">
    <source>
    </source>
</evidence>
<evidence type="ECO:0000269" key="16">
    <source ref="2"/>
</evidence>
<evidence type="ECO:0000303" key="17">
    <source>
    </source>
</evidence>
<evidence type="ECO:0000305" key="18"/>
<evidence type="ECO:0000305" key="19">
    <source>
    </source>
</evidence>
<evidence type="ECO:0007744" key="20">
    <source>
        <dbReference type="PDB" id="5EPC"/>
    </source>
</evidence>
<evidence type="ECO:0007744" key="21">
    <source>
        <dbReference type="PDB" id="5F9C"/>
    </source>
</evidence>
<evidence type="ECO:0007744" key="22">
    <source>
        <dbReference type="PDB" id="5HSH"/>
    </source>
</evidence>
<evidence type="ECO:0007744" key="23">
    <source>
    </source>
</evidence>
<evidence type="ECO:0007744" key="24">
    <source>
    </source>
</evidence>
<evidence type="ECO:0007744" key="25">
    <source>
    </source>
</evidence>
<evidence type="ECO:0007744" key="26">
    <source>
    </source>
</evidence>
<evidence type="ECO:0007744" key="27">
    <source>
    </source>
</evidence>
<evidence type="ECO:0007744" key="28">
    <source>
    </source>
</evidence>
<evidence type="ECO:0007829" key="29">
    <source>
        <dbReference type="PDB" id="5F9C"/>
    </source>
</evidence>
<evidence type="ECO:0007829" key="30">
    <source>
        <dbReference type="PDB" id="5HSH"/>
    </source>
</evidence>
<evidence type="ECO:0007829" key="31">
    <source>
        <dbReference type="PDB" id="5JN5"/>
    </source>
</evidence>
<evidence type="ECO:0007829" key="32">
    <source>
        <dbReference type="PDB" id="5VIN"/>
    </source>
</evidence>
<evidence type="ECO:0007829" key="33">
    <source>
        <dbReference type="PDB" id="6UIQ"/>
    </source>
</evidence>
<evidence type="ECO:0007829" key="34">
    <source>
        <dbReference type="PDB" id="7S0W"/>
    </source>
</evidence>
<comment type="function">
    <text evidence="5 7 12 19">Catalyzes the reversible isomerization of alpha-D-glucose 1-phosphate to alpha-D-glucose 6-phosphate (PubMed:15378030, PubMed:25288802). The mechanism proceeds via the intermediate compound alpha-D-glucose 1,6-bisphosphate (Probable) (PubMed:25288802). This enzyme participates in both the breakdown and synthesis of glucose (PubMed:17924679, PubMed:25288802).</text>
</comment>
<comment type="catalytic activity">
    <reaction evidence="5 12">
        <text>alpha-D-glucose 1-phosphate = alpha-D-glucose 6-phosphate</text>
        <dbReference type="Rhea" id="RHEA:23536"/>
        <dbReference type="ChEBI" id="CHEBI:58225"/>
        <dbReference type="ChEBI" id="CHEBI:58601"/>
        <dbReference type="EC" id="5.4.2.2"/>
    </reaction>
</comment>
<comment type="catalytic activity">
    <reaction evidence="12 19">
        <text>O-phospho-L-seryl-[protein] + alpha-D-glucose 1-phosphate = alpha-D-glucose 1,6-bisphosphate + L-seryl-[protein]</text>
        <dbReference type="Rhea" id="RHEA:68748"/>
        <dbReference type="Rhea" id="RHEA-COMP:9863"/>
        <dbReference type="Rhea" id="RHEA-COMP:11604"/>
        <dbReference type="ChEBI" id="CHEBI:29999"/>
        <dbReference type="ChEBI" id="CHEBI:58392"/>
        <dbReference type="ChEBI" id="CHEBI:58601"/>
        <dbReference type="ChEBI" id="CHEBI:83421"/>
    </reaction>
</comment>
<comment type="catalytic activity">
    <reaction evidence="12 19">
        <text>alpha-D-glucose 1,6-bisphosphate + L-seryl-[protein] = O-phospho-L-seryl-[protein] + alpha-D-glucose 6-phosphate</text>
        <dbReference type="Rhea" id="RHEA:68752"/>
        <dbReference type="Rhea" id="RHEA-COMP:9863"/>
        <dbReference type="Rhea" id="RHEA-COMP:11604"/>
        <dbReference type="ChEBI" id="CHEBI:29999"/>
        <dbReference type="ChEBI" id="CHEBI:58225"/>
        <dbReference type="ChEBI" id="CHEBI:58392"/>
        <dbReference type="ChEBI" id="CHEBI:83421"/>
    </reaction>
</comment>
<comment type="cofactor">
    <cofactor evidence="13">
        <name>Mg(2+)</name>
        <dbReference type="ChEBI" id="CHEBI:18420"/>
    </cofactor>
    <text evidence="13">Binds 1 Mg(2+) ion per subunit.</text>
</comment>
<comment type="activity regulation">
    <text evidence="12">Glucose-1,6-bisphosphate enhances phosphorylation of the active site Ser-117, and thereby increases enzyme activity.</text>
</comment>
<comment type="biophysicochemical properties">
    <kinetics>
        <KM evidence="12">80 uM for alpha-D-glucose 1-phosphate</KM>
    </kinetics>
</comment>
<comment type="subunit">
    <text evidence="13">Monomer.</text>
</comment>
<comment type="interaction">
    <interactant intactId="EBI-2861475">
        <id>P36871</id>
    </interactant>
    <interactant intactId="EBI-717399">
        <id>Q9BSI4</id>
        <label>TINF2</label>
    </interactant>
    <organismsDiffer>false</organismsDiffer>
    <experiments>2</experiments>
</comment>
<comment type="subcellular location">
    <molecule>Isoform 1</molecule>
    <subcellularLocation>
        <location>Cytoplasm</location>
    </subcellularLocation>
</comment>
<comment type="alternative products">
    <event type="alternative splicing"/>
    <isoform>
        <id>P36871-1</id>
        <name>1</name>
        <sequence type="displayed"/>
    </isoform>
    <isoform>
        <id>P36871-2</id>
        <name>2</name>
        <sequence type="described" ref="VSP_004686"/>
    </isoform>
    <isoform>
        <id>P36871-3</id>
        <name>3</name>
        <sequence type="described" ref="VSP_045204"/>
    </isoform>
</comment>
<comment type="PTM">
    <text evidence="5">Phosphorylation at Thr-467 by PAK1 significantly enhances enzymatic activity.</text>
</comment>
<comment type="polymorphism">
    <text>Many polymorphic variants of PGM1 exist. 8 different alleles are known: PGM1*1+, PGM1*1-, PGM1*2+, PGM1*2-, PGM1*3+, PGM1*3-, PGM1*7+ and PGM1*7-. The sequence of PGM1*1+ is shown here.</text>
</comment>
<comment type="disease" evidence="8 9 10 11 12 13">
    <disease id="DI-03611">
        <name>Congenital disorder of glycosylation 1T</name>
        <acronym>CDG1T</acronym>
        <description>A form of congenital disorder of glycosylation, a multisystem disorder caused by a defect in glycoprotein biosynthesis and characterized by under-glycosylated serum glycoproteins. Congenital disorders of glycosylation result in a wide variety of clinical features, such as defects in the nervous system development, psychomotor retardation, dysmorphic features, hypotonia, coagulation disorders, and immunodeficiency. The broad spectrum of features reflects the critical role of N-glycoproteins during embryonic development, differentiation, and maintenance of cell functions.</description>
        <dbReference type="MIM" id="614921"/>
    </disease>
    <text>The disease is caused by variants affecting the gene represented in this entry.</text>
</comment>
<comment type="similarity">
    <text evidence="18">Belongs to the phosphohexose mutase family.</text>
</comment>
<comment type="sequence caution" evidence="18">
    <conflict type="erroneous initiation">
        <sequence resource="EMBL-CDS" id="AAH90856"/>
    </conflict>
    <text>Truncated N-terminus.</text>
</comment>
<sequence>MVKIVTVKTQAYQDQKPGTSGLRKRVKVFQSSANYAENFIQSIISTVEPAQRQEATLVVGGDGRFYMKEAIQLIARIAAANGIGRLVIGQNGILSTPAVSCIIRKIKAIGGIILTASHNPGGPNGDFGIKFNISNGGPAPEAITDKIFQISKTIEEYAVCPDLKVDLGVLGKQQFDLENKFKPFTVEIVDSVEAYATMLRSIFDFSALKELLSGPNRLKIRIDAMHGVVGPYVKKILCEELGAPANSAVNCVPLEDFGGHHPDPNLTYAADLVETMKSGEHDFGAAFDGDGDRNMILGKHGFFVNPSDSVAVIAANIFSIPYFQQTGVRGFARSMPTSGALDRVASATKIALYETPTGWKFFGNLMDASKLSLCGEESFGTGSDHIREKDGLWAVLAWLSILATRKQSVEDILKDHWQKYGRNFFTRYDYEEVEAEGANKMMKDLEALMFDRSFVGKQFSANDKVYTVEKADNFEYSDPVDGSISRNQGLRLIFTDGSRIVFRLSGTGSAGATIRLYIDSYEKDVAKINQDPQVMLAPLISIALKVSQLQERTGRTAPTVIT</sequence>
<feature type="chain" id="PRO_0000147776" description="Phosphoglucomutase-1">
    <location>
        <begin position="1"/>
        <end position="562"/>
    </location>
</feature>
<feature type="active site" description="Phosphoserine intermediate" evidence="12">
    <location>
        <position position="117"/>
    </location>
</feature>
<feature type="binding site" evidence="1">
    <location>
        <position position="23"/>
    </location>
    <ligand>
        <name>alpha-D-glucose 1,6-bisphosphate</name>
        <dbReference type="ChEBI" id="CHEBI:58392"/>
    </ligand>
</feature>
<feature type="binding site" evidence="1">
    <location>
        <position position="117"/>
    </location>
    <ligand>
        <name>alpha-D-glucose 1,6-bisphosphate</name>
        <dbReference type="ChEBI" id="CHEBI:58392"/>
    </ligand>
</feature>
<feature type="binding site" description="via phosphate groupe" evidence="12">
    <location>
        <position position="117"/>
    </location>
    <ligand>
        <name>Mg(2+)</name>
        <dbReference type="ChEBI" id="CHEBI:18420"/>
    </ligand>
</feature>
<feature type="binding site" evidence="13 20 21">
    <location>
        <position position="288"/>
    </location>
    <ligand>
        <name>Mg(2+)</name>
        <dbReference type="ChEBI" id="CHEBI:18420"/>
    </ligand>
</feature>
<feature type="binding site" evidence="13 20 21">
    <location>
        <position position="290"/>
    </location>
    <ligand>
        <name>Mg(2+)</name>
        <dbReference type="ChEBI" id="CHEBI:18420"/>
    </ligand>
</feature>
<feature type="binding site" evidence="1">
    <location>
        <position position="292"/>
    </location>
    <ligand>
        <name>alpha-D-glucose 1,6-bisphosphate</name>
        <dbReference type="ChEBI" id="CHEBI:58392"/>
    </ligand>
</feature>
<feature type="binding site" evidence="13 20 21">
    <location>
        <position position="292"/>
    </location>
    <ligand>
        <name>Mg(2+)</name>
        <dbReference type="ChEBI" id="CHEBI:18420"/>
    </ligand>
</feature>
<feature type="binding site" evidence="1">
    <location>
        <position position="293"/>
    </location>
    <ligand>
        <name>alpha-D-glucose 1,6-bisphosphate</name>
        <dbReference type="ChEBI" id="CHEBI:58392"/>
    </ligand>
</feature>
<feature type="binding site" evidence="1">
    <location>
        <position position="357"/>
    </location>
    <ligand>
        <name>alpha-D-glucose 1,6-bisphosphate</name>
        <dbReference type="ChEBI" id="CHEBI:58392"/>
    </ligand>
</feature>
<feature type="binding site" evidence="1">
    <location>
        <position position="376"/>
    </location>
    <ligand>
        <name>alpha-D-glucose 1,6-bisphosphate</name>
        <dbReference type="ChEBI" id="CHEBI:58392"/>
    </ligand>
</feature>
<feature type="binding site" evidence="1">
    <location>
        <position position="378"/>
    </location>
    <ligand>
        <name>alpha-D-glucose 1,6-bisphosphate</name>
        <dbReference type="ChEBI" id="CHEBI:58392"/>
    </ligand>
</feature>
<feature type="binding site" evidence="1">
    <location>
        <position position="389"/>
    </location>
    <ligand>
        <name>alpha-D-glucose 1,6-bisphosphate</name>
        <dbReference type="ChEBI" id="CHEBI:58392"/>
    </ligand>
</feature>
<feature type="modified residue" description="N-acetylmethionine" evidence="27">
    <location>
        <position position="1"/>
    </location>
</feature>
<feature type="modified residue" description="N6-acetyllysine" evidence="23">
    <location>
        <position position="16"/>
    </location>
</feature>
<feature type="modified residue" description="Phosphothreonine" evidence="3">
    <location>
        <position position="115"/>
    </location>
</feature>
<feature type="modified residue" description="Phosphoserine" evidence="12 24 25 26">
    <location>
        <position position="117"/>
    </location>
</feature>
<feature type="modified residue" description="Phosphoserine" evidence="2">
    <location>
        <position position="134"/>
    </location>
</feature>
<feature type="modified residue" description="Phosphothreonine" evidence="28">
    <location>
        <position position="185"/>
    </location>
</feature>
<feature type="modified residue" description="Phosphoserine" evidence="28">
    <location>
        <position position="201"/>
    </location>
</feature>
<feature type="modified residue" description="Phosphoserine" evidence="28">
    <location>
        <position position="206"/>
    </location>
</feature>
<feature type="modified residue" description="Phosphoserine" evidence="2">
    <location>
        <position position="213"/>
    </location>
</feature>
<feature type="modified residue" description="N6-acetyllysine" evidence="3">
    <location>
        <position position="349"/>
    </location>
</feature>
<feature type="modified residue" description="Phosphotyrosine" evidence="3">
    <location>
        <position position="353"/>
    </location>
</feature>
<feature type="modified residue" description="Phosphoserine" evidence="2">
    <location>
        <position position="369"/>
    </location>
</feature>
<feature type="modified residue" description="Phosphoserine" evidence="28">
    <location>
        <position position="378"/>
    </location>
</feature>
<feature type="modified residue" description="N6-succinyllysine" evidence="3">
    <location>
        <position position="419"/>
    </location>
</feature>
<feature type="modified residue" description="Phosphothreonine; by PAK1" evidence="5">
    <location>
        <position position="467"/>
    </location>
</feature>
<feature type="modified residue" description="Phosphoserine" evidence="2">
    <location>
        <position position="477"/>
    </location>
</feature>
<feature type="modified residue" description="Phosphoserine" evidence="2">
    <location>
        <position position="485"/>
    </location>
</feature>
<feature type="modified residue" description="Phosphoserine" evidence="28">
    <location>
        <position position="505"/>
    </location>
</feature>
<feature type="modified residue" description="Phosphothreonine" evidence="3">
    <location>
        <position position="507"/>
    </location>
</feature>
<feature type="modified residue" description="Phosphoserine" evidence="28">
    <location>
        <position position="509"/>
    </location>
</feature>
<feature type="modified residue" description="Phosphoserine" evidence="2">
    <location>
        <position position="541"/>
    </location>
</feature>
<feature type="splice variant" id="VSP_045204" description="In isoform 3." evidence="17">
    <location>
        <begin position="1"/>
        <end position="197"/>
    </location>
</feature>
<feature type="splice variant" id="VSP_004686" description="In isoform 2." evidence="18">
    <original>MVKIVTVKTQAYQDQKPGTSGLRKRVKVFQSSANYAENFIQSIISTVEPAQRQEATLVVGGDGRFYMKEAIQLIARI</original>
    <variation>MSDFEEWISGTYRKMEEGPLPLLTFATAPYHDQKPGTSGLRKKTYYFEEKPCYLENFIQSIFFSIDLKDRQGSSLVVGGDGRYFNKSAIETIVQM</variation>
    <location>
        <begin position="1"/>
        <end position="77"/>
    </location>
</feature>
<feature type="sequence variant" id="VAR_071635" description="In CDG1T; strongly reduces phosphoglucomutase activity; dbSNP:rs1320810473." evidence="11 12">
    <original>T</original>
    <variation>A</variation>
    <location>
        <position position="19"/>
    </location>
</feature>
<feature type="sequence variant" id="VAR_071636" description="In CDG1T; strongly reduces solubility; increases aggregation; dbSNP:rs587777402." evidence="11 12">
    <original>N</original>
    <variation>Y</variation>
    <location>
        <position position="38"/>
    </location>
</feature>
<feature type="sequence variant" id="VAR_071637" description="In CDG1T; reduces solubility; increases aggregation; dbSNP:rs1300651770." evidence="11 12">
    <original>Q</original>
    <variation>R</variation>
    <location>
        <position position="41"/>
    </location>
</feature>
<feature type="sequence variant" id="VAR_071638" description="In CDG1T; reduces solubility; reduces strongly phosphoglucomutase activity; dbSNP:rs587777403." evidence="11 12">
    <original>D</original>
    <variation>H</variation>
    <location>
        <position position="62"/>
    </location>
</feature>
<feature type="sequence variant" id="VAR_006090" description="In allele PGM1*7+, allele PGM1*7-, allele PGM1*3+ and allele PGM1*3-; phosphoglucomutase activity is similar to wild-type; dbSNP:rs200390982." evidence="12 14">
    <original>K</original>
    <variation>M</variation>
    <location>
        <position position="68"/>
    </location>
</feature>
<feature type="sequence variant" id="VAR_050496" description="In dbSNP:rs855314.">
    <original>I</original>
    <variation>V</variation>
    <location>
        <position position="88"/>
    </location>
</feature>
<feature type="sequence variant" id="VAR_062280" description="In CDG1T; reduces mildly phosphoglucomutase activity; dbSNP:rs121918371." evidence="8 11 12">
    <original>T</original>
    <variation>A</variation>
    <location>
        <position position="115"/>
    </location>
</feature>
<feature type="sequence variant" id="VAR_069219" description="In CDG1T; there is 7% enzyme residual phosphoglucomutase activity; dbSNP:rs398122912." evidence="9 11 12">
    <original>G</original>
    <variation>R</variation>
    <location>
        <position position="121"/>
    </location>
</feature>
<feature type="sequence variant" id="VAR_006091" description="In allele PGM1*2+, allele PGM1*2-, allele PGM1*3+ and allele PGM1*3-; phosphoglucomutase activity is similar to wild-type; dbSNP:rs1126728." evidence="6 12 14 15 16">
    <original>R</original>
    <variation>C</variation>
    <location>
        <position position="221"/>
    </location>
</feature>
<feature type="sequence variant" id="VAR_071639" description="In CDG1T; strongly reduces phosphoglucomutase activity; dbSNP:rs1465877146." evidence="11 12">
    <original>D</original>
    <variation>G</variation>
    <location>
        <position position="263"/>
    </location>
</feature>
<feature type="sequence variant" id="VAR_071640" description="In CDG1T; strongly reduces phosphoglucomutase activity; dbSNP:rs587777404." evidence="11 12">
    <original>D</original>
    <variation>Y</variation>
    <location>
        <position position="263"/>
    </location>
</feature>
<feature type="sequence variant" id="VAR_071641" description="In CDG1T; strongly reduces phosphoglucomutase activity; dbSNP:rs772768778." evidence="10 11 12">
    <original>G</original>
    <variation>R</variation>
    <location>
        <position position="291"/>
    </location>
</feature>
<feature type="sequence variant" id="VAR_071642" description="In CDG1T; decreases mildly solubility; dbSNP:rs777164338." evidence="11 12">
    <original>G</original>
    <variation>R</variation>
    <location>
        <position position="330"/>
    </location>
</feature>
<feature type="sequence variant" id="VAR_071643" description="In CDG1T; decreases strongly solubility." evidence="11 12">
    <original>E</original>
    <variation>K</variation>
    <location>
        <position position="377"/>
    </location>
</feature>
<feature type="sequence variant" id="VAR_071644" description="In CDG1T; decreases strongly solubility; dbSNP:rs1301021797." evidence="11 12">
    <original>E</original>
    <variation>K</variation>
    <location>
        <position position="388"/>
    </location>
</feature>
<feature type="sequence variant" id="VAR_006092" description="In allele PGM1*1-, allele PGM1*2-, allele PGM1*3- and allele PGM1*7-; phosphoglucomutase activity is similar to wild-type; dbSNP:rs11208257." evidence="4 6 12 14 15 16">
    <original>Y</original>
    <variation>H</variation>
    <location>
        <position position="420"/>
    </location>
</feature>
<feature type="sequence variant" id="VAR_034380" description="In dbSNP:rs6676290.">
    <original>V</original>
    <variation>I</variation>
    <location>
        <position position="501"/>
    </location>
</feature>
<feature type="sequence variant" id="VAR_071645" description="In CDG1T; decreases strongly solubility; dbSNP:rs587777401." evidence="11 12">
    <original>L</original>
    <variation>P</variation>
    <location>
        <position position="516"/>
    </location>
</feature>
<feature type="sequence conflict" description="In Ref. 5; AAH67763." evidence="18" ref="5">
    <original>S</original>
    <variation>C</variation>
    <location>
        <position position="134"/>
    </location>
</feature>
<feature type="strand" evidence="31">
    <location>
        <begin position="5"/>
        <end position="8"/>
    </location>
</feature>
<feature type="turn" evidence="31">
    <location>
        <begin position="18"/>
        <end position="20"/>
    </location>
</feature>
<feature type="strand" evidence="31">
    <location>
        <begin position="22"/>
        <end position="25"/>
    </location>
</feature>
<feature type="helix" evidence="31">
    <location>
        <begin position="26"/>
        <end position="31"/>
    </location>
</feature>
<feature type="strand" evidence="30">
    <location>
        <begin position="32"/>
        <end position="34"/>
    </location>
</feature>
<feature type="helix" evidence="31">
    <location>
        <begin position="35"/>
        <end position="44"/>
    </location>
</feature>
<feature type="helix" evidence="31">
    <location>
        <begin position="49"/>
        <end position="51"/>
    </location>
</feature>
<feature type="turn" evidence="31">
    <location>
        <begin position="52"/>
        <end position="54"/>
    </location>
</feature>
<feature type="strand" evidence="31">
    <location>
        <begin position="56"/>
        <end position="61"/>
    </location>
</feature>
<feature type="helix" evidence="31">
    <location>
        <begin position="67"/>
        <end position="80"/>
    </location>
</feature>
<feature type="strand" evidence="31">
    <location>
        <begin position="85"/>
        <end position="93"/>
    </location>
</feature>
<feature type="helix" evidence="31">
    <location>
        <begin position="96"/>
        <end position="106"/>
    </location>
</feature>
<feature type="strand" evidence="31">
    <location>
        <begin position="109"/>
        <end position="114"/>
    </location>
</feature>
<feature type="strand" evidence="31">
    <location>
        <begin position="125"/>
        <end position="133"/>
    </location>
</feature>
<feature type="strand" evidence="31">
    <location>
        <begin position="136"/>
        <end position="138"/>
    </location>
</feature>
<feature type="helix" evidence="31">
    <location>
        <begin position="141"/>
        <end position="153"/>
    </location>
</feature>
<feature type="strand" evidence="31">
    <location>
        <begin position="156"/>
        <end position="159"/>
    </location>
</feature>
<feature type="strand" evidence="33">
    <location>
        <begin position="167"/>
        <end position="169"/>
    </location>
</feature>
<feature type="strand" evidence="31">
    <location>
        <begin position="171"/>
        <end position="177"/>
    </location>
</feature>
<feature type="strand" evidence="31">
    <location>
        <begin position="184"/>
        <end position="189"/>
    </location>
</feature>
<feature type="helix" evidence="31">
    <location>
        <begin position="193"/>
        <end position="202"/>
    </location>
</feature>
<feature type="helix" evidence="31">
    <location>
        <begin position="205"/>
        <end position="212"/>
    </location>
</feature>
<feature type="strand" evidence="31">
    <location>
        <begin position="220"/>
        <end position="223"/>
    </location>
</feature>
<feature type="strand" evidence="29">
    <location>
        <begin position="227"/>
        <end position="229"/>
    </location>
</feature>
<feature type="helix" evidence="31">
    <location>
        <begin position="230"/>
        <end position="236"/>
    </location>
</feature>
<feature type="turn" evidence="31">
    <location>
        <begin position="237"/>
        <end position="241"/>
    </location>
</feature>
<feature type="helix" evidence="31">
    <location>
        <begin position="245"/>
        <end position="247"/>
    </location>
</feature>
<feature type="strand" evidence="31">
    <location>
        <begin position="248"/>
        <end position="250"/>
    </location>
</feature>
<feature type="helix" evidence="31">
    <location>
        <begin position="257"/>
        <end position="259"/>
    </location>
</feature>
<feature type="turn" evidence="31">
    <location>
        <begin position="266"/>
        <end position="269"/>
    </location>
</feature>
<feature type="helix" evidence="31">
    <location>
        <begin position="270"/>
        <end position="277"/>
    </location>
</feature>
<feature type="strand" evidence="31">
    <location>
        <begin position="282"/>
        <end position="287"/>
    </location>
</feature>
<feature type="strand" evidence="31">
    <location>
        <begin position="291"/>
        <end position="298"/>
    </location>
</feature>
<feature type="helix" evidence="31">
    <location>
        <begin position="299"/>
        <end position="301"/>
    </location>
</feature>
<feature type="strand" evidence="30">
    <location>
        <begin position="302"/>
        <end position="304"/>
    </location>
</feature>
<feature type="helix" evidence="31">
    <location>
        <begin position="306"/>
        <end position="315"/>
    </location>
</feature>
<feature type="helix" evidence="31">
    <location>
        <begin position="316"/>
        <end position="319"/>
    </location>
</feature>
<feature type="helix" evidence="31">
    <location>
        <begin position="321"/>
        <end position="326"/>
    </location>
</feature>
<feature type="strand" evidence="31">
    <location>
        <begin position="331"/>
        <end position="334"/>
    </location>
</feature>
<feature type="helix" evidence="31">
    <location>
        <begin position="340"/>
        <end position="348"/>
    </location>
</feature>
<feature type="strand" evidence="31">
    <location>
        <begin position="352"/>
        <end position="355"/>
    </location>
</feature>
<feature type="helix" evidence="31">
    <location>
        <begin position="359"/>
        <end position="367"/>
    </location>
</feature>
<feature type="strand" evidence="31">
    <location>
        <begin position="372"/>
        <end position="376"/>
    </location>
</feature>
<feature type="turn" evidence="31">
    <location>
        <begin position="377"/>
        <end position="379"/>
    </location>
</feature>
<feature type="strand" evidence="31">
    <location>
        <begin position="380"/>
        <end position="383"/>
    </location>
</feature>
<feature type="strand" evidence="31">
    <location>
        <begin position="386"/>
        <end position="388"/>
    </location>
</feature>
<feature type="helix" evidence="31">
    <location>
        <begin position="391"/>
        <end position="405"/>
    </location>
</feature>
<feature type="helix" evidence="31">
    <location>
        <begin position="409"/>
        <end position="420"/>
    </location>
</feature>
<feature type="strand" evidence="31">
    <location>
        <begin position="422"/>
        <end position="433"/>
    </location>
</feature>
<feature type="helix" evidence="31">
    <location>
        <begin position="435"/>
        <end position="450"/>
    </location>
</feature>
<feature type="helix" evidence="34">
    <location>
        <begin position="452"/>
        <end position="454"/>
    </location>
</feature>
<feature type="strand" evidence="31">
    <location>
        <begin position="458"/>
        <end position="460"/>
    </location>
</feature>
<feature type="strand" evidence="31">
    <location>
        <begin position="465"/>
        <end position="473"/>
    </location>
</feature>
<feature type="turn" evidence="31">
    <location>
        <begin position="479"/>
        <end position="481"/>
    </location>
</feature>
<feature type="strand" evidence="31">
    <location>
        <begin position="490"/>
        <end position="494"/>
    </location>
</feature>
<feature type="strand" evidence="31">
    <location>
        <begin position="499"/>
        <end position="504"/>
    </location>
</feature>
<feature type="turn" evidence="32">
    <location>
        <begin position="506"/>
        <end position="509"/>
    </location>
</feature>
<feature type="strand" evidence="31">
    <location>
        <begin position="512"/>
        <end position="522"/>
    </location>
</feature>
<feature type="turn" evidence="31">
    <location>
        <begin position="525"/>
        <end position="529"/>
    </location>
</feature>
<feature type="helix" evidence="31">
    <location>
        <begin position="532"/>
        <end position="547"/>
    </location>
</feature>
<feature type="helix" evidence="31">
    <location>
        <begin position="549"/>
        <end position="553"/>
    </location>
</feature>
<feature type="strand" evidence="31">
    <location>
        <begin position="559"/>
        <end position="562"/>
    </location>
</feature>
<feature type="modified residue" description="N-acetylmethionine" evidence="26">
    <location sequence="P36871-2">
        <position position="1"/>
    </location>
</feature>
<reference key="1">
    <citation type="journal article" date="1992" name="Proc. Natl. Acad. Sci. U.S.A.">
        <title>Phosphoglucomutase 1: complete human and rabbit mRNA sequences and direct mapping of this highly polymorphic marker on human chromosome 1.</title>
        <authorList>
            <person name="Whitehouse D.B."/>
            <person name="Putt W."/>
            <person name="Lovegrove J.U."/>
            <person name="Morrison K.E."/>
            <person name="Hollyoake M."/>
            <person name="Fox M.F."/>
            <person name="Hopkinson D.A."/>
            <person name="Edwards Y.H."/>
        </authorList>
    </citation>
    <scope>NUCLEOTIDE SEQUENCE [MRNA] (ISOFORM 1)</scope>
    <source>
        <tissue>Skeletal muscle</tissue>
    </source>
</reference>
<reference key="2">
    <citation type="submission" date="2003-05" db="EMBL/GenBank/DDBJ databases">
        <title>Cloning of human full-length CDSs in BD Creator(TM) system donor vector.</title>
        <authorList>
            <person name="Kalnine N."/>
            <person name="Chen X."/>
            <person name="Rolfs A."/>
            <person name="Halleck A."/>
            <person name="Hines L."/>
            <person name="Eisenstein S."/>
            <person name="Koundinya M."/>
            <person name="Raphael J."/>
            <person name="Moreira D."/>
            <person name="Kelley T."/>
            <person name="LaBaer J."/>
            <person name="Lin Y."/>
            <person name="Phelan M."/>
            <person name="Farmer A."/>
        </authorList>
    </citation>
    <scope>NUCLEOTIDE SEQUENCE [LARGE SCALE MRNA] (ISOFORM 1)</scope>
    <scope>VARIANTS CYS-221 AND HIS-420</scope>
</reference>
<reference key="3">
    <citation type="journal article" date="2004" name="Nat. Genet.">
        <title>Complete sequencing and characterization of 21,243 full-length human cDNAs.</title>
        <authorList>
            <person name="Ota T."/>
            <person name="Suzuki Y."/>
            <person name="Nishikawa T."/>
            <person name="Otsuki T."/>
            <person name="Sugiyama T."/>
            <person name="Irie R."/>
            <person name="Wakamatsu A."/>
            <person name="Hayashi K."/>
            <person name="Sato H."/>
            <person name="Nagai K."/>
            <person name="Kimura K."/>
            <person name="Makita H."/>
            <person name="Sekine M."/>
            <person name="Obayashi M."/>
            <person name="Nishi T."/>
            <person name="Shibahara T."/>
            <person name="Tanaka T."/>
            <person name="Ishii S."/>
            <person name="Yamamoto J."/>
            <person name="Saito K."/>
            <person name="Kawai Y."/>
            <person name="Isono Y."/>
            <person name="Nakamura Y."/>
            <person name="Nagahari K."/>
            <person name="Murakami K."/>
            <person name="Yasuda T."/>
            <person name="Iwayanagi T."/>
            <person name="Wagatsuma M."/>
            <person name="Shiratori A."/>
            <person name="Sudo H."/>
            <person name="Hosoiri T."/>
            <person name="Kaku Y."/>
            <person name="Kodaira H."/>
            <person name="Kondo H."/>
            <person name="Sugawara M."/>
            <person name="Takahashi M."/>
            <person name="Kanda K."/>
            <person name="Yokoi T."/>
            <person name="Furuya T."/>
            <person name="Kikkawa E."/>
            <person name="Omura Y."/>
            <person name="Abe K."/>
            <person name="Kamihara K."/>
            <person name="Katsuta N."/>
            <person name="Sato K."/>
            <person name="Tanikawa M."/>
            <person name="Yamazaki M."/>
            <person name="Ninomiya K."/>
            <person name="Ishibashi T."/>
            <person name="Yamashita H."/>
            <person name="Murakawa K."/>
            <person name="Fujimori K."/>
            <person name="Tanai H."/>
            <person name="Kimata M."/>
            <person name="Watanabe M."/>
            <person name="Hiraoka S."/>
            <person name="Chiba Y."/>
            <person name="Ishida S."/>
            <person name="Ono Y."/>
            <person name="Takiguchi S."/>
            <person name="Watanabe S."/>
            <person name="Yosida M."/>
            <person name="Hotuta T."/>
            <person name="Kusano J."/>
            <person name="Kanehori K."/>
            <person name="Takahashi-Fujii A."/>
            <person name="Hara H."/>
            <person name="Tanase T.-O."/>
            <person name="Nomura Y."/>
            <person name="Togiya S."/>
            <person name="Komai F."/>
            <person name="Hara R."/>
            <person name="Takeuchi K."/>
            <person name="Arita M."/>
            <person name="Imose N."/>
            <person name="Musashino K."/>
            <person name="Yuuki H."/>
            <person name="Oshima A."/>
            <person name="Sasaki N."/>
            <person name="Aotsuka S."/>
            <person name="Yoshikawa Y."/>
            <person name="Matsunawa H."/>
            <person name="Ichihara T."/>
            <person name="Shiohata N."/>
            <person name="Sano S."/>
            <person name="Moriya S."/>
            <person name="Momiyama H."/>
            <person name="Satoh N."/>
            <person name="Takami S."/>
            <person name="Terashima Y."/>
            <person name="Suzuki O."/>
            <person name="Nakagawa S."/>
            <person name="Senoh A."/>
            <person name="Mizoguchi H."/>
            <person name="Goto Y."/>
            <person name="Shimizu F."/>
            <person name="Wakebe H."/>
            <person name="Hishigaki H."/>
            <person name="Watanabe T."/>
            <person name="Sugiyama A."/>
            <person name="Takemoto M."/>
            <person name="Kawakami B."/>
            <person name="Yamazaki M."/>
            <person name="Watanabe K."/>
            <person name="Kumagai A."/>
            <person name="Itakura S."/>
            <person name="Fukuzumi Y."/>
            <person name="Fujimori Y."/>
            <person name="Komiyama M."/>
            <person name="Tashiro H."/>
            <person name="Tanigami A."/>
            <person name="Fujiwara T."/>
            <person name="Ono T."/>
            <person name="Yamada K."/>
            <person name="Fujii Y."/>
            <person name="Ozaki K."/>
            <person name="Hirao M."/>
            <person name="Ohmori Y."/>
            <person name="Kawabata A."/>
            <person name="Hikiji T."/>
            <person name="Kobatake N."/>
            <person name="Inagaki H."/>
            <person name="Ikema Y."/>
            <person name="Okamoto S."/>
            <person name="Okitani R."/>
            <person name="Kawakami T."/>
            <person name="Noguchi S."/>
            <person name="Itoh T."/>
            <person name="Shigeta K."/>
            <person name="Senba T."/>
            <person name="Matsumura K."/>
            <person name="Nakajima Y."/>
            <person name="Mizuno T."/>
            <person name="Morinaga M."/>
            <person name="Sasaki M."/>
            <person name="Togashi T."/>
            <person name="Oyama M."/>
            <person name="Hata H."/>
            <person name="Watanabe M."/>
            <person name="Komatsu T."/>
            <person name="Mizushima-Sugano J."/>
            <person name="Satoh T."/>
            <person name="Shirai Y."/>
            <person name="Takahashi Y."/>
            <person name="Nakagawa K."/>
            <person name="Okumura K."/>
            <person name="Nagase T."/>
            <person name="Nomura N."/>
            <person name="Kikuchi H."/>
            <person name="Masuho Y."/>
            <person name="Yamashita R."/>
            <person name="Nakai K."/>
            <person name="Yada T."/>
            <person name="Nakamura Y."/>
            <person name="Ohara O."/>
            <person name="Isogai T."/>
            <person name="Sugano S."/>
        </authorList>
    </citation>
    <scope>NUCLEOTIDE SEQUENCE [LARGE SCALE MRNA] (ISOFORMS 1 AND 3)</scope>
    <scope>VARIANT HIS-420</scope>
    <source>
        <tissue>Astrocyte</tissue>
        <tissue>Mesangial cell</tissue>
    </source>
</reference>
<reference key="4">
    <citation type="journal article" date="2006" name="Nature">
        <title>The DNA sequence and biological annotation of human chromosome 1.</title>
        <authorList>
            <person name="Gregory S.G."/>
            <person name="Barlow K.F."/>
            <person name="McLay K.E."/>
            <person name="Kaul R."/>
            <person name="Swarbreck D."/>
            <person name="Dunham A."/>
            <person name="Scott C.E."/>
            <person name="Howe K.L."/>
            <person name="Woodfine K."/>
            <person name="Spencer C.C.A."/>
            <person name="Jones M.C."/>
            <person name="Gillson C."/>
            <person name="Searle S."/>
            <person name="Zhou Y."/>
            <person name="Kokocinski F."/>
            <person name="McDonald L."/>
            <person name="Evans R."/>
            <person name="Phillips K."/>
            <person name="Atkinson A."/>
            <person name="Cooper R."/>
            <person name="Jones C."/>
            <person name="Hall R.E."/>
            <person name="Andrews T.D."/>
            <person name="Lloyd C."/>
            <person name="Ainscough R."/>
            <person name="Almeida J.P."/>
            <person name="Ambrose K.D."/>
            <person name="Anderson F."/>
            <person name="Andrew R.W."/>
            <person name="Ashwell R.I.S."/>
            <person name="Aubin K."/>
            <person name="Babbage A.K."/>
            <person name="Bagguley C.L."/>
            <person name="Bailey J."/>
            <person name="Beasley H."/>
            <person name="Bethel G."/>
            <person name="Bird C.P."/>
            <person name="Bray-Allen S."/>
            <person name="Brown J.Y."/>
            <person name="Brown A.J."/>
            <person name="Buckley D."/>
            <person name="Burton J."/>
            <person name="Bye J."/>
            <person name="Carder C."/>
            <person name="Chapman J.C."/>
            <person name="Clark S.Y."/>
            <person name="Clarke G."/>
            <person name="Clee C."/>
            <person name="Cobley V."/>
            <person name="Collier R.E."/>
            <person name="Corby N."/>
            <person name="Coville G.J."/>
            <person name="Davies J."/>
            <person name="Deadman R."/>
            <person name="Dunn M."/>
            <person name="Earthrowl M."/>
            <person name="Ellington A.G."/>
            <person name="Errington H."/>
            <person name="Frankish A."/>
            <person name="Frankland J."/>
            <person name="French L."/>
            <person name="Garner P."/>
            <person name="Garnett J."/>
            <person name="Gay L."/>
            <person name="Ghori M.R.J."/>
            <person name="Gibson R."/>
            <person name="Gilby L.M."/>
            <person name="Gillett W."/>
            <person name="Glithero R.J."/>
            <person name="Grafham D.V."/>
            <person name="Griffiths C."/>
            <person name="Griffiths-Jones S."/>
            <person name="Grocock R."/>
            <person name="Hammond S."/>
            <person name="Harrison E.S.I."/>
            <person name="Hart E."/>
            <person name="Haugen E."/>
            <person name="Heath P.D."/>
            <person name="Holmes S."/>
            <person name="Holt K."/>
            <person name="Howden P.J."/>
            <person name="Hunt A.R."/>
            <person name="Hunt S.E."/>
            <person name="Hunter G."/>
            <person name="Isherwood J."/>
            <person name="James R."/>
            <person name="Johnson C."/>
            <person name="Johnson D."/>
            <person name="Joy A."/>
            <person name="Kay M."/>
            <person name="Kershaw J.K."/>
            <person name="Kibukawa M."/>
            <person name="Kimberley A.M."/>
            <person name="King A."/>
            <person name="Knights A.J."/>
            <person name="Lad H."/>
            <person name="Laird G."/>
            <person name="Lawlor S."/>
            <person name="Leongamornlert D.A."/>
            <person name="Lloyd D.M."/>
            <person name="Loveland J."/>
            <person name="Lovell J."/>
            <person name="Lush M.J."/>
            <person name="Lyne R."/>
            <person name="Martin S."/>
            <person name="Mashreghi-Mohammadi M."/>
            <person name="Matthews L."/>
            <person name="Matthews N.S.W."/>
            <person name="McLaren S."/>
            <person name="Milne S."/>
            <person name="Mistry S."/>
            <person name="Moore M.J.F."/>
            <person name="Nickerson T."/>
            <person name="O'Dell C.N."/>
            <person name="Oliver K."/>
            <person name="Palmeiri A."/>
            <person name="Palmer S.A."/>
            <person name="Parker A."/>
            <person name="Patel D."/>
            <person name="Pearce A.V."/>
            <person name="Peck A.I."/>
            <person name="Pelan S."/>
            <person name="Phelps K."/>
            <person name="Phillimore B.J."/>
            <person name="Plumb R."/>
            <person name="Rajan J."/>
            <person name="Raymond C."/>
            <person name="Rouse G."/>
            <person name="Saenphimmachak C."/>
            <person name="Sehra H.K."/>
            <person name="Sheridan E."/>
            <person name="Shownkeen R."/>
            <person name="Sims S."/>
            <person name="Skuce C.D."/>
            <person name="Smith M."/>
            <person name="Steward C."/>
            <person name="Subramanian S."/>
            <person name="Sycamore N."/>
            <person name="Tracey A."/>
            <person name="Tromans A."/>
            <person name="Van Helmond Z."/>
            <person name="Wall M."/>
            <person name="Wallis J.M."/>
            <person name="White S."/>
            <person name="Whitehead S.L."/>
            <person name="Wilkinson J.E."/>
            <person name="Willey D.L."/>
            <person name="Williams H."/>
            <person name="Wilming L."/>
            <person name="Wray P.W."/>
            <person name="Wu Z."/>
            <person name="Coulson A."/>
            <person name="Vaudin M."/>
            <person name="Sulston J.E."/>
            <person name="Durbin R.M."/>
            <person name="Hubbard T."/>
            <person name="Wooster R."/>
            <person name="Dunham I."/>
            <person name="Carter N.P."/>
            <person name="McVean G."/>
            <person name="Ross M.T."/>
            <person name="Harrow J."/>
            <person name="Olson M.V."/>
            <person name="Beck S."/>
            <person name="Rogers J."/>
            <person name="Bentley D.R."/>
        </authorList>
    </citation>
    <scope>NUCLEOTIDE SEQUENCE [LARGE SCALE GENOMIC DNA]</scope>
</reference>
<reference key="5">
    <citation type="journal article" date="2004" name="Genome Res.">
        <title>The status, quality, and expansion of the NIH full-length cDNA project: the Mammalian Gene Collection (MGC).</title>
        <authorList>
            <consortium name="The MGC Project Team"/>
        </authorList>
    </citation>
    <scope>NUCLEOTIDE SEQUENCE [LARGE SCALE MRNA] (ISOFORM 1)</scope>
    <scope>VARIANTS CYS-221 AND HIS-420</scope>
    <source>
        <tissue>Cervix</tissue>
        <tissue>Hypothalamus</tissue>
        <tissue>Placenta</tissue>
        <tissue>Skin</tissue>
    </source>
</reference>
<reference key="6">
    <citation type="journal article" date="1993" name="Biochem. J.">
        <title>Phosphoglucomutase 1: a gene with two promoters and a duplicated first exon.</title>
        <authorList>
            <person name="Putt W."/>
            <person name="Ives J.H."/>
            <person name="Hollyoake M."/>
            <person name="Hopkinson D.A."/>
            <person name="Whitehouse D.B."/>
            <person name="Edwards Y.H."/>
        </authorList>
    </citation>
    <scope>NUCLEOTIDE SEQUENCE [GENOMIC DNA] OF 1-82 (ISOFORMS 1 AND 2)</scope>
    <scope>ALTERNATIVE SPLICING</scope>
</reference>
<reference key="7">
    <citation type="journal article" date="2004" name="Oncogene">
        <title>Regulation of phosphoglucomutase 1 phosphorylation and activity by a signaling kinase.</title>
        <authorList>
            <person name="Gururaj A."/>
            <person name="Barnes C.J."/>
            <person name="Vadlamudi R.K."/>
            <person name="Kumar R."/>
        </authorList>
    </citation>
    <scope>PHOSPHORYLATION AT THR-467</scope>
    <scope>FUNCTION</scope>
    <scope>CATALYTIC ACTIVITY</scope>
</reference>
<reference key="8">
    <citation type="journal article" date="2006" name="Cell">
        <title>Global, in vivo, and site-specific phosphorylation dynamics in signaling networks.</title>
        <authorList>
            <person name="Olsen J.V."/>
            <person name="Blagoev B."/>
            <person name="Gnad F."/>
            <person name="Macek B."/>
            <person name="Kumar C."/>
            <person name="Mortensen P."/>
            <person name="Mann M."/>
        </authorList>
    </citation>
    <scope>IDENTIFICATION BY MASS SPECTROMETRY [LARGE SCALE ANALYSIS]</scope>
    <source>
        <tissue>Cervix carcinoma</tissue>
    </source>
</reference>
<reference key="9">
    <citation type="journal article" date="2007" name="J. Proteome Res.">
        <title>Improved titanium dioxide enrichment of phosphopeptides from HeLa cells and high confident phosphopeptide identification by cross-validation of MS/MS and MS/MS/MS spectra.</title>
        <authorList>
            <person name="Yu L.R."/>
            <person name="Zhu Z."/>
            <person name="Chan K.C."/>
            <person name="Issaq H.J."/>
            <person name="Dimitrov D.S."/>
            <person name="Veenstra T.D."/>
        </authorList>
    </citation>
    <scope>IDENTIFICATION BY MASS SPECTROMETRY [LARGE SCALE ANALYSIS]</scope>
    <source>
        <tissue>Cervix carcinoma</tissue>
    </source>
</reference>
<reference key="10">
    <citation type="journal article" date="2008" name="Proc. Natl. Acad. Sci. U.S.A.">
        <title>A quantitative atlas of mitotic phosphorylation.</title>
        <authorList>
            <person name="Dephoure N."/>
            <person name="Zhou C."/>
            <person name="Villen J."/>
            <person name="Beausoleil S.A."/>
            <person name="Bakalarski C.E."/>
            <person name="Elledge S.J."/>
            <person name="Gygi S.P."/>
        </authorList>
    </citation>
    <scope>IDENTIFICATION BY MASS SPECTROMETRY [LARGE SCALE ANALYSIS]</scope>
    <source>
        <tissue>Cervix carcinoma</tissue>
    </source>
</reference>
<reference key="11">
    <citation type="journal article" date="2009" name="Sci. Signal.">
        <title>Quantitative phosphoproteomic analysis of T cell receptor signaling reveals system-wide modulation of protein-protein interactions.</title>
        <authorList>
            <person name="Mayya V."/>
            <person name="Lundgren D.H."/>
            <person name="Hwang S.-I."/>
            <person name="Rezaul K."/>
            <person name="Wu L."/>
            <person name="Eng J.K."/>
            <person name="Rodionov V."/>
            <person name="Han D.K."/>
        </authorList>
    </citation>
    <scope>PHOSPHORYLATION [LARGE SCALE ANALYSIS] AT SER-117</scope>
    <scope>IDENTIFICATION BY MASS SPECTROMETRY [LARGE SCALE ANALYSIS]</scope>
    <source>
        <tissue>Leukemic T-cell</tissue>
    </source>
</reference>
<reference key="12">
    <citation type="journal article" date="2009" name="Science">
        <title>Lysine acetylation targets protein complexes and co-regulates major cellular functions.</title>
        <authorList>
            <person name="Choudhary C."/>
            <person name="Kumar C."/>
            <person name="Gnad F."/>
            <person name="Nielsen M.L."/>
            <person name="Rehman M."/>
            <person name="Walther T.C."/>
            <person name="Olsen J.V."/>
            <person name="Mann M."/>
        </authorList>
    </citation>
    <scope>ACETYLATION [LARGE SCALE ANALYSIS] AT LYS-16</scope>
    <scope>IDENTIFICATION BY MASS SPECTROMETRY [LARGE SCALE ANALYSIS]</scope>
</reference>
<reference key="13">
    <citation type="journal article" date="2010" name="Sci. Signal.">
        <title>Quantitative phosphoproteomics reveals widespread full phosphorylation site occupancy during mitosis.</title>
        <authorList>
            <person name="Olsen J.V."/>
            <person name="Vermeulen M."/>
            <person name="Santamaria A."/>
            <person name="Kumar C."/>
            <person name="Miller M.L."/>
            <person name="Jensen L.J."/>
            <person name="Gnad F."/>
            <person name="Cox J."/>
            <person name="Jensen T.S."/>
            <person name="Nigg E.A."/>
            <person name="Brunak S."/>
            <person name="Mann M."/>
        </authorList>
    </citation>
    <scope>PHOSPHORYLATION [LARGE SCALE ANALYSIS] AT SER-117</scope>
    <scope>IDENTIFICATION BY MASS SPECTROMETRY [LARGE SCALE ANALYSIS]</scope>
    <source>
        <tissue>Cervix carcinoma</tissue>
    </source>
</reference>
<reference key="14">
    <citation type="journal article" date="2011" name="BMC Syst. Biol.">
        <title>Initial characterization of the human central proteome.</title>
        <authorList>
            <person name="Burkard T.R."/>
            <person name="Planyavsky M."/>
            <person name="Kaupe I."/>
            <person name="Breitwieser F.P."/>
            <person name="Buerckstuemmer T."/>
            <person name="Bennett K.L."/>
            <person name="Superti-Furga G."/>
            <person name="Colinge J."/>
        </authorList>
    </citation>
    <scope>IDENTIFICATION BY MASS SPECTROMETRY [LARGE SCALE ANALYSIS]</scope>
</reference>
<reference key="15">
    <citation type="journal article" date="2011" name="Sci. Signal.">
        <title>System-wide temporal characterization of the proteome and phosphoproteome of human embryonic stem cell differentiation.</title>
        <authorList>
            <person name="Rigbolt K.T."/>
            <person name="Prokhorova T.A."/>
            <person name="Akimov V."/>
            <person name="Henningsen J."/>
            <person name="Johansen P.T."/>
            <person name="Kratchmarova I."/>
            <person name="Kassem M."/>
            <person name="Mann M."/>
            <person name="Olsen J.V."/>
            <person name="Blagoev B."/>
        </authorList>
    </citation>
    <scope>ACETYLATION [LARGE SCALE ANALYSIS] AT MET-1 (ISOFORM 2)</scope>
    <scope>PHOSPHORYLATION [LARGE SCALE ANALYSIS] AT SER-117</scope>
    <scope>IDENTIFICATION BY MASS SPECTROMETRY [LARGE SCALE ANALYSIS]</scope>
</reference>
<reference key="16">
    <citation type="journal article" date="2012" name="Proc. Natl. Acad. Sci. U.S.A.">
        <title>N-terminal acetylome analyses and functional insights of the N-terminal acetyltransferase NatB.</title>
        <authorList>
            <person name="Van Damme P."/>
            <person name="Lasa M."/>
            <person name="Polevoda B."/>
            <person name="Gazquez C."/>
            <person name="Elosegui-Artola A."/>
            <person name="Kim D.S."/>
            <person name="De Juan-Pardo E."/>
            <person name="Demeyer K."/>
            <person name="Hole K."/>
            <person name="Larrea E."/>
            <person name="Timmerman E."/>
            <person name="Prieto J."/>
            <person name="Arnesen T."/>
            <person name="Sherman F."/>
            <person name="Gevaert K."/>
            <person name="Aldabe R."/>
        </authorList>
    </citation>
    <scope>ACETYLATION [LARGE SCALE ANALYSIS] AT MET-1</scope>
    <scope>IDENTIFICATION BY MASS SPECTROMETRY [LARGE SCALE ANALYSIS]</scope>
</reference>
<reference key="17">
    <citation type="journal article" date="2013" name="J. Proteome Res.">
        <title>Toward a comprehensive characterization of a human cancer cell phosphoproteome.</title>
        <authorList>
            <person name="Zhou H."/>
            <person name="Di Palma S."/>
            <person name="Preisinger C."/>
            <person name="Peng M."/>
            <person name="Polat A.N."/>
            <person name="Heck A.J."/>
            <person name="Mohammed S."/>
        </authorList>
    </citation>
    <scope>IDENTIFICATION BY MASS SPECTROMETRY [LARGE SCALE ANALYSIS]</scope>
    <source>
        <tissue>Cervix carcinoma</tissue>
    </source>
</reference>
<reference key="18">
    <citation type="journal article" date="2014" name="J. Proteomics">
        <title>An enzyme assisted RP-RPLC approach for in-depth analysis of human liver phosphoproteome.</title>
        <authorList>
            <person name="Bian Y."/>
            <person name="Song C."/>
            <person name="Cheng K."/>
            <person name="Dong M."/>
            <person name="Wang F."/>
            <person name="Huang J."/>
            <person name="Sun D."/>
            <person name="Wang L."/>
            <person name="Ye M."/>
            <person name="Zou H."/>
        </authorList>
    </citation>
    <scope>PHOSPHORYLATION [LARGE SCALE ANALYSIS] AT THR-185; SER-201; SER-206; SER-378; SER-505 AND SER-509</scope>
    <scope>IDENTIFICATION BY MASS SPECTROMETRY [LARGE SCALE ANALYSIS]</scope>
    <source>
        <tissue>Liver</tissue>
    </source>
</reference>
<reference evidence="20 21 22" key="19">
    <citation type="journal article" date="2016" name="J. Mol. Biol.">
        <title>Induced structural disorder as a molecular mechanism for enzyme dysfunction in phosphoglucomutase 1 deficiency.</title>
        <authorList>
            <person name="Stiers K.M."/>
            <person name="Kain B.N."/>
            <person name="Graham A.C."/>
            <person name="Beamer L.J."/>
        </authorList>
    </citation>
    <scope>X-RAY CRYSTALLOGRAPHY (1.85 ANGSTROMS) OF WILD-TYPE; VARIANT CDG1T ARG-121 AND VARIANT ARG-291 IN COMPLEX WITH MAGNESIUM</scope>
    <scope>COFACTOR</scope>
    <scope>SUBUNIT</scope>
</reference>
<reference key="20">
    <citation type="journal article" date="1993" name="Proc. Natl. Acad. Sci. U.S.A.">
        <title>Intragenic recombination at the human phosphoglucomutase 1 locus: predictions fulfilled.</title>
        <authorList>
            <person name="Takahashi N."/>
            <person name="Neels J.V."/>
        </authorList>
    </citation>
    <scope>VARIANTS MET-68; CYS-221 AND HIS-420</scope>
</reference>
<reference key="21">
    <citation type="journal article" date="1993" name="Proc. Natl. Acad. Sci. U.S.A.">
        <title>The classical human phosphoglucomutase (PGM1) isozyme polymorphism is generated by intragenic recombination.</title>
        <authorList>
            <person name="March R.E."/>
            <person name="Putt W."/>
            <person name="Hollyoake M."/>
            <person name="Ives J.H."/>
            <person name="Lovegrove J.U."/>
            <person name="Hopkinson D.A."/>
            <person name="Edwards Y.H."/>
            <person name="Whitehouse D.B."/>
        </authorList>
    </citation>
    <scope>VARIANTS CYS-221 AND HIS-420</scope>
</reference>
<reference key="22">
    <citation type="journal article" date="2009" name="N. Engl. J. Med.">
        <title>Muscle glycogenosis due to phosphoglucomutase 1 deficiency.</title>
        <authorList>
            <person name="Stojkovic T."/>
            <person name="Vissing J."/>
            <person name="Petit F."/>
            <person name="Piraud M."/>
            <person name="Orngreen M.C."/>
            <person name="Andersen G."/>
            <person name="Claeys K.G."/>
            <person name="Wary C."/>
            <person name="Hogrel J.Y."/>
            <person name="Laforet P."/>
        </authorList>
    </citation>
    <scope>INVOLVEMENT IN CDG1T</scope>
    <scope>VARIANT CDG1T ALA-115</scope>
</reference>
<reference key="23">
    <citation type="journal article" date="2012" name="Hum. Mol. Genet.">
        <title>Gene identification in the congenital disorders of glycosylation type I by whole-exome sequencing.</title>
        <authorList>
            <person name="Timal S."/>
            <person name="Hoischen A."/>
            <person name="Lehle L."/>
            <person name="Adamowicz M."/>
            <person name="Huijben K."/>
            <person name="Sykut-Cegielska J."/>
            <person name="Paprocka J."/>
            <person name="Jamroz E."/>
            <person name="van Spronsen F.J."/>
            <person name="Korner C."/>
            <person name="Gilissen C."/>
            <person name="Rodenburg R.J."/>
            <person name="Eidhof I."/>
            <person name="Van den Heuvel L."/>
            <person name="Thiel C."/>
            <person name="Wevers R.A."/>
            <person name="Morava E."/>
            <person name="Veltman J."/>
            <person name="Lefeber D.J."/>
        </authorList>
    </citation>
    <scope>VARIANT CDG1T ARG-121</scope>
</reference>
<reference key="24">
    <citation type="journal article" date="2013" name="J. Inherit. Metab. Dis.">
        <title>A novel congenital disorder of glycosylation type without central nervous system involvement caused by mutations in the phosphoglucomutase 1 gene.</title>
        <authorList>
            <person name="Perez B."/>
            <person name="Medrano C."/>
            <person name="Ecay M.J."/>
            <person name="Ruiz-Sala P."/>
            <person name="Martinez-Pardo M."/>
            <person name="Ugarte M."/>
            <person name="Perez-Cerda C."/>
        </authorList>
    </citation>
    <scope>VARIANT CDG1T ARG-291</scope>
</reference>
<reference key="25">
    <citation type="journal article" date="2014" name="N. Engl. J. Med.">
        <title>Multiple phenotypes in phosphoglucomutase 1 deficiency.</title>
        <authorList>
            <person name="Tegtmeyer L.C."/>
            <person name="Rust S."/>
            <person name="van Scherpenzeel M."/>
            <person name="Ng B.G."/>
            <person name="Losfeld M.E."/>
            <person name="Timal S."/>
            <person name="Raymond K."/>
            <person name="He P."/>
            <person name="Ichikawa M."/>
            <person name="Veltman J."/>
            <person name="Huijben K."/>
            <person name="Shin Y.S."/>
            <person name="Sharma V."/>
            <person name="Adamowicz M."/>
            <person name="Lammens M."/>
            <person name="Reunert J."/>
            <person name="Witten A."/>
            <person name="Schrapers E."/>
            <person name="Matthijs G."/>
            <person name="Jaeken J."/>
            <person name="Rymen D."/>
            <person name="Stojkovic T."/>
            <person name="Laforet P."/>
            <person name="Petit F."/>
            <person name="Aumaitre O."/>
            <person name="Czarnowska E."/>
            <person name="Piraud M."/>
            <person name="Podskarbi T."/>
            <person name="Stanley C.A."/>
            <person name="Matalon R."/>
            <person name="Burda P."/>
            <person name="Seyyedi S."/>
            <person name="Debus V."/>
            <person name="Socha P."/>
            <person name="Sykut-Cegielska J."/>
            <person name="van Spronsen F."/>
            <person name="de Meirleir L."/>
            <person name="Vajro P."/>
            <person name="DeClue T."/>
            <person name="Ficicioglu C."/>
            <person name="Wada Y."/>
            <person name="Wevers R.A."/>
            <person name="Vanderschaeghe D."/>
            <person name="Callewaert N."/>
            <person name="Fingerhut R."/>
            <person name="van Schaftingen E."/>
            <person name="Freeze H.H."/>
            <person name="Morava E."/>
            <person name="Lefeber D.J."/>
            <person name="Marquardt T."/>
        </authorList>
    </citation>
    <scope>VARIANTS CDG1T ALA-19; TYR-38; ARG-41; HIS-62; ALA-115; ARG-121; TYR-263; GLY-263; ARG-291; ARG-330; LYS-377; LYS-388 AND PRO-516</scope>
</reference>
<reference key="26">
    <citation type="journal article" date="2014" name="J. Biol. Chem.">
        <title>Compromised catalysis and potential folding defects in in vitro studies of missense mutants associated with hereditary phosphoglucomutase 1 deficiency.</title>
        <authorList>
            <person name="Lee Y."/>
            <person name="Stiers K.M."/>
            <person name="Kain B.N."/>
            <person name="Beamer L.J."/>
        </authorList>
    </citation>
    <scope>CHARACTERIZATION OF VARIANTS CDG1T ALA-19; TYR-38; ARG-41; HIS-62; ALA-115; ARG-121; GLY-263; TYR-263; ARG-291; ARG-330; LYS-377; LYS-388 AND PRO-516</scope>
    <scope>VARIANTS MET-68; CYS-221 AND HIS-420</scope>
    <scope>FUNCTION</scope>
    <scope>CATALYTIC ACTIVITY</scope>
    <scope>BIOPHYSICOCHEMICAL PROPERTIES</scope>
    <scope>ACTIVE SITE</scope>
    <scope>PHOSPHORYLATION AT SER-117</scope>
    <scope>ACTIVITY REGULATION</scope>
</reference>